<accession>A9KYJ6</accession>
<protein>
    <recommendedName>
        <fullName evidence="1">Serine hydroxymethyltransferase</fullName>
        <shortName evidence="1">SHMT</shortName>
        <shortName evidence="1">Serine methylase</shortName>
        <ecNumber evidence="1">2.1.2.1</ecNumber>
    </recommendedName>
</protein>
<reference key="1">
    <citation type="submission" date="2007-11" db="EMBL/GenBank/DDBJ databases">
        <title>Complete sequence of chromosome of Shewanella baltica OS195.</title>
        <authorList>
            <consortium name="US DOE Joint Genome Institute"/>
            <person name="Copeland A."/>
            <person name="Lucas S."/>
            <person name="Lapidus A."/>
            <person name="Barry K."/>
            <person name="Glavina del Rio T."/>
            <person name="Dalin E."/>
            <person name="Tice H."/>
            <person name="Pitluck S."/>
            <person name="Chain P."/>
            <person name="Malfatti S."/>
            <person name="Shin M."/>
            <person name="Vergez L."/>
            <person name="Schmutz J."/>
            <person name="Larimer F."/>
            <person name="Land M."/>
            <person name="Hauser L."/>
            <person name="Kyrpides N."/>
            <person name="Kim E."/>
            <person name="Brettar I."/>
            <person name="Rodrigues J."/>
            <person name="Konstantinidis K."/>
            <person name="Klappenbach J."/>
            <person name="Hofle M."/>
            <person name="Tiedje J."/>
            <person name="Richardson P."/>
        </authorList>
    </citation>
    <scope>NUCLEOTIDE SEQUENCE [LARGE SCALE GENOMIC DNA]</scope>
    <source>
        <strain>OS195</strain>
    </source>
</reference>
<organism>
    <name type="scientific">Shewanella baltica (strain OS195)</name>
    <dbReference type="NCBI Taxonomy" id="399599"/>
    <lineage>
        <taxon>Bacteria</taxon>
        <taxon>Pseudomonadati</taxon>
        <taxon>Pseudomonadota</taxon>
        <taxon>Gammaproteobacteria</taxon>
        <taxon>Alteromonadales</taxon>
        <taxon>Shewanellaceae</taxon>
        <taxon>Shewanella</taxon>
    </lineage>
</organism>
<evidence type="ECO:0000255" key="1">
    <source>
        <dbReference type="HAMAP-Rule" id="MF_00051"/>
    </source>
</evidence>
<sequence length="417" mass="45180">MLKKDMNIADYDPELFKAIQNETLRQEEHIELIASENYTSPRVMEAQGSQLTNKYAEGYPGKRYYGGCEYVDVVETLAIERAKELFGATYANVQPHSGSQANSAVYMALLKPGDTVLGMNLAHGGHLTHGSPVNFSGKLYNIIPYGIDESGKIDYDEMERLAVEHKPKMMIGGFSAYSGIVDWAKMREIADKIGAYLFVDMAHVAGLIAAGVYPNPVPHAHVVTSTTHKTLAGPRGGVILSAADDEDLYKKLNSAVFPGGQGGPLMHVIAGKAVAFKEALEPEFKVYQQQVVNNAKAMVEVFLERGYKIVSGGTSNHLMLVDLIGRDLTGKEADAALGSANITVNKNSVPNDPRSPFVTSGVRIGTPAITRRGFKEAESKELTGWICDILDDASNPAVIERVKGQVLALCARFPVYG</sequence>
<feature type="chain" id="PRO_1000074907" description="Serine hydroxymethyltransferase">
    <location>
        <begin position="1"/>
        <end position="417"/>
    </location>
</feature>
<feature type="binding site" evidence="1">
    <location>
        <position position="121"/>
    </location>
    <ligand>
        <name>(6S)-5,6,7,8-tetrahydrofolate</name>
        <dbReference type="ChEBI" id="CHEBI:57453"/>
    </ligand>
</feature>
<feature type="binding site" evidence="1">
    <location>
        <begin position="125"/>
        <end position="127"/>
    </location>
    <ligand>
        <name>(6S)-5,6,7,8-tetrahydrofolate</name>
        <dbReference type="ChEBI" id="CHEBI:57453"/>
    </ligand>
</feature>
<feature type="binding site" evidence="1">
    <location>
        <begin position="355"/>
        <end position="357"/>
    </location>
    <ligand>
        <name>(6S)-5,6,7,8-tetrahydrofolate</name>
        <dbReference type="ChEBI" id="CHEBI:57453"/>
    </ligand>
</feature>
<feature type="site" description="Plays an important role in substrate specificity" evidence="1">
    <location>
        <position position="228"/>
    </location>
</feature>
<feature type="modified residue" description="N6-(pyridoxal phosphate)lysine" evidence="1">
    <location>
        <position position="229"/>
    </location>
</feature>
<dbReference type="EC" id="2.1.2.1" evidence="1"/>
<dbReference type="EMBL" id="CP000891">
    <property type="protein sequence ID" value="ABX50467.1"/>
    <property type="molecule type" value="Genomic_DNA"/>
</dbReference>
<dbReference type="RefSeq" id="WP_006082644.1">
    <property type="nucleotide sequence ID" value="NC_009997.1"/>
</dbReference>
<dbReference type="SMR" id="A9KYJ6"/>
<dbReference type="GeneID" id="11773355"/>
<dbReference type="KEGG" id="sbn:Sbal195_3305"/>
<dbReference type="HOGENOM" id="CLU_022477_2_1_6"/>
<dbReference type="UniPathway" id="UPA00193"/>
<dbReference type="UniPathway" id="UPA00288">
    <property type="reaction ID" value="UER01023"/>
</dbReference>
<dbReference type="Proteomes" id="UP000000770">
    <property type="component" value="Chromosome"/>
</dbReference>
<dbReference type="GO" id="GO:0005829">
    <property type="term" value="C:cytosol"/>
    <property type="evidence" value="ECO:0007669"/>
    <property type="project" value="TreeGrafter"/>
</dbReference>
<dbReference type="GO" id="GO:0004372">
    <property type="term" value="F:glycine hydroxymethyltransferase activity"/>
    <property type="evidence" value="ECO:0007669"/>
    <property type="project" value="UniProtKB-UniRule"/>
</dbReference>
<dbReference type="GO" id="GO:0030170">
    <property type="term" value="F:pyridoxal phosphate binding"/>
    <property type="evidence" value="ECO:0007669"/>
    <property type="project" value="UniProtKB-UniRule"/>
</dbReference>
<dbReference type="GO" id="GO:0019264">
    <property type="term" value="P:glycine biosynthetic process from serine"/>
    <property type="evidence" value="ECO:0007669"/>
    <property type="project" value="UniProtKB-UniRule"/>
</dbReference>
<dbReference type="GO" id="GO:0035999">
    <property type="term" value="P:tetrahydrofolate interconversion"/>
    <property type="evidence" value="ECO:0007669"/>
    <property type="project" value="UniProtKB-UniRule"/>
</dbReference>
<dbReference type="CDD" id="cd00378">
    <property type="entry name" value="SHMT"/>
    <property type="match status" value="1"/>
</dbReference>
<dbReference type="FunFam" id="3.40.640.10:FF:000001">
    <property type="entry name" value="Serine hydroxymethyltransferase"/>
    <property type="match status" value="1"/>
</dbReference>
<dbReference type="FunFam" id="3.90.1150.10:FF:000003">
    <property type="entry name" value="Serine hydroxymethyltransferase"/>
    <property type="match status" value="1"/>
</dbReference>
<dbReference type="Gene3D" id="3.90.1150.10">
    <property type="entry name" value="Aspartate Aminotransferase, domain 1"/>
    <property type="match status" value="1"/>
</dbReference>
<dbReference type="Gene3D" id="3.40.640.10">
    <property type="entry name" value="Type I PLP-dependent aspartate aminotransferase-like (Major domain)"/>
    <property type="match status" value="1"/>
</dbReference>
<dbReference type="HAMAP" id="MF_00051">
    <property type="entry name" value="SHMT"/>
    <property type="match status" value="1"/>
</dbReference>
<dbReference type="InterPro" id="IPR015424">
    <property type="entry name" value="PyrdxlP-dep_Trfase"/>
</dbReference>
<dbReference type="InterPro" id="IPR015421">
    <property type="entry name" value="PyrdxlP-dep_Trfase_major"/>
</dbReference>
<dbReference type="InterPro" id="IPR015422">
    <property type="entry name" value="PyrdxlP-dep_Trfase_small"/>
</dbReference>
<dbReference type="InterPro" id="IPR001085">
    <property type="entry name" value="Ser_HO-MeTrfase"/>
</dbReference>
<dbReference type="InterPro" id="IPR049943">
    <property type="entry name" value="Ser_HO-MeTrfase-like"/>
</dbReference>
<dbReference type="InterPro" id="IPR019798">
    <property type="entry name" value="Ser_HO-MeTrfase_PLP_BS"/>
</dbReference>
<dbReference type="InterPro" id="IPR039429">
    <property type="entry name" value="SHMT-like_dom"/>
</dbReference>
<dbReference type="NCBIfam" id="NF000586">
    <property type="entry name" value="PRK00011.1"/>
    <property type="match status" value="1"/>
</dbReference>
<dbReference type="PANTHER" id="PTHR11680">
    <property type="entry name" value="SERINE HYDROXYMETHYLTRANSFERASE"/>
    <property type="match status" value="1"/>
</dbReference>
<dbReference type="PANTHER" id="PTHR11680:SF50">
    <property type="entry name" value="SERINE HYDROXYMETHYLTRANSFERASE"/>
    <property type="match status" value="1"/>
</dbReference>
<dbReference type="Pfam" id="PF00464">
    <property type="entry name" value="SHMT"/>
    <property type="match status" value="1"/>
</dbReference>
<dbReference type="PIRSF" id="PIRSF000412">
    <property type="entry name" value="SHMT"/>
    <property type="match status" value="1"/>
</dbReference>
<dbReference type="SUPFAM" id="SSF53383">
    <property type="entry name" value="PLP-dependent transferases"/>
    <property type="match status" value="1"/>
</dbReference>
<dbReference type="PROSITE" id="PS00096">
    <property type="entry name" value="SHMT"/>
    <property type="match status" value="1"/>
</dbReference>
<comment type="function">
    <text evidence="1">Catalyzes the reversible interconversion of serine and glycine with tetrahydrofolate (THF) serving as the one-carbon carrier. This reaction serves as the major source of one-carbon groups required for the biosynthesis of purines, thymidylate, methionine, and other important biomolecules. Also exhibits THF-independent aldolase activity toward beta-hydroxyamino acids, producing glycine and aldehydes, via a retro-aldol mechanism.</text>
</comment>
<comment type="catalytic activity">
    <reaction evidence="1">
        <text>(6R)-5,10-methylene-5,6,7,8-tetrahydrofolate + glycine + H2O = (6S)-5,6,7,8-tetrahydrofolate + L-serine</text>
        <dbReference type="Rhea" id="RHEA:15481"/>
        <dbReference type="ChEBI" id="CHEBI:15377"/>
        <dbReference type="ChEBI" id="CHEBI:15636"/>
        <dbReference type="ChEBI" id="CHEBI:33384"/>
        <dbReference type="ChEBI" id="CHEBI:57305"/>
        <dbReference type="ChEBI" id="CHEBI:57453"/>
        <dbReference type="EC" id="2.1.2.1"/>
    </reaction>
</comment>
<comment type="cofactor">
    <cofactor evidence="1">
        <name>pyridoxal 5'-phosphate</name>
        <dbReference type="ChEBI" id="CHEBI:597326"/>
    </cofactor>
</comment>
<comment type="pathway">
    <text evidence="1">One-carbon metabolism; tetrahydrofolate interconversion.</text>
</comment>
<comment type="pathway">
    <text evidence="1">Amino-acid biosynthesis; glycine biosynthesis; glycine from L-serine: step 1/1.</text>
</comment>
<comment type="subunit">
    <text evidence="1">Homodimer.</text>
</comment>
<comment type="subcellular location">
    <subcellularLocation>
        <location evidence="1">Cytoplasm</location>
    </subcellularLocation>
</comment>
<comment type="similarity">
    <text evidence="1">Belongs to the SHMT family.</text>
</comment>
<keyword id="KW-0028">Amino-acid biosynthesis</keyword>
<keyword id="KW-0963">Cytoplasm</keyword>
<keyword id="KW-0554">One-carbon metabolism</keyword>
<keyword id="KW-0663">Pyridoxal phosphate</keyword>
<keyword id="KW-0808">Transferase</keyword>
<gene>
    <name evidence="1" type="primary">glyA</name>
    <name type="ordered locus">Sbal195_3305</name>
</gene>
<name>GLYA_SHEB9</name>
<proteinExistence type="inferred from homology"/>